<sequence length="454" mass="50152">MALQLGRLSSGPCWLVARGGCGGPRAWSQCGGGGLRAWSQRSAAGRVCRPPGPAGTEQSRGLGHGSTSRGGPWVGTGLAAALAGLVGLATAAFGHVQRAEMLPKTSGTRATSLGRPEEEEDELAHRCSSFMAPPVTDLGELRRRPGDMKTKMELLILETQAQVCQALAQVDGGANFSVDRWERKEGGGGISCVLQDGCVFEKAGVSISVVHGNLSEEAAKQMRSRGKVLKTKDGKLPFCAMGVSSVIHPKNPHAPTIHFNYRYFEVEEADGNKQWWFGGGCDLTPTYLNQEDAVHFHRTLKEACDQHGPDLYPKFKKWCDDYFFIAHRGERRGIGGIFFDDLDSPSKEEVFRFVQSCARAVVPSYIPLVKKHCDDSFTPQEKLWQQLRRGRYVEFNLLYDRGTKFGLFTPGSRIESILMSLPLTARWEYMHSPSENSKEAEILEVLRHPRDWVR</sequence>
<comment type="function">
    <text evidence="13">Catalyzes the aerobic oxidative decarboxylation of propionate groups of rings A and B of coproporphyrinogen-III to yield the vinyl groups in protoporphyrinogen-IX and participates to the sixth step in the heme biosynthetic pathway.</text>
</comment>
<comment type="catalytic activity">
    <reaction evidence="13">
        <text>coproporphyrinogen III + O2 + 2 H(+) = protoporphyrinogen IX + 2 CO2 + 2 H2O</text>
        <dbReference type="Rhea" id="RHEA:18257"/>
        <dbReference type="ChEBI" id="CHEBI:15377"/>
        <dbReference type="ChEBI" id="CHEBI:15378"/>
        <dbReference type="ChEBI" id="CHEBI:15379"/>
        <dbReference type="ChEBI" id="CHEBI:16526"/>
        <dbReference type="ChEBI" id="CHEBI:57307"/>
        <dbReference type="ChEBI" id="CHEBI:57309"/>
        <dbReference type="EC" id="1.3.3.3"/>
    </reaction>
    <physiologicalReaction direction="left-to-right" evidence="23">
        <dbReference type="Rhea" id="RHEA:18258"/>
    </physiologicalReaction>
</comment>
<comment type="pathway">
    <text evidence="13">Porphyrin-containing compound metabolism; protoporphyrin-IX biosynthesis; protoporphyrinogen-IX from coproporphyrinogen-III (O2 route): step 1/1.</text>
</comment>
<comment type="subunit">
    <text evidence="7">Homodimer.</text>
</comment>
<comment type="subcellular location">
    <subcellularLocation>
        <location evidence="2">Mitochondrion intermembrane space</location>
    </subcellularLocation>
</comment>
<comment type="alternative products">
    <event type="alternative splicing"/>
    <isoform>
        <id>P36551-1</id>
        <name>1</name>
        <sequence type="displayed"/>
    </isoform>
    <isoform>
        <id>P36551-2</id>
        <name>2</name>
        <sequence type="described" ref="VSP_057182 VSP_057183"/>
    </isoform>
</comment>
<comment type="disease" evidence="4 6 8 11 12 14 15 16 17 18">
    <disease id="DI-00545">
        <name>Hereditary coproporphyria</name>
        <acronym>HCP</acronym>
        <description>A form of porphyria. Porphyrias are inherited defects in the biosynthesis of heme, resulting in the accumulation and increased excretion of porphyrins or porphyrin precursors. They are classified as erythropoietic or hepatic, depending on whether the enzyme deficiency occurs in red blood cells or in the liver. Hereditary coproporphyria is an acute hepatic porphyria characterized by skin photosensitivity, attacks of abdominal pain, neurological disturbances, and psychiatric symptoms. Most attacks are precipitated by drugs, alcohol, caloric deprivation, infections, or endocrine factors. Hereditary coproporphyria is biochemically characterized by overexcretion of coproporphyrin III in the urine and in the feces.</description>
        <dbReference type="MIM" id="121300"/>
    </disease>
    <text>The disease is caused by variants affecting the gene represented in this entry.</text>
</comment>
<comment type="disease" evidence="9 10">
    <disease id="DI-05848">
        <name>Harderoporphyria</name>
        <acronym>HARPO</acronym>
        <description>An autosomal recessive form of porphyria. Porphyrias are inherited defects in the biosynthesis of heme, resulting in the accumulation and increased excretion of porphyrins or porphyrin precursors. HARPO is a rare erythropoietic variant form characterized by neonatal hemolytic anemia, sometimes accompanied by skin lesions, and massive excretion of harderoporphyrin in feces.</description>
        <dbReference type="MIM" id="618892"/>
    </disease>
    <text>The disease is caused by variants affecting the gene represented in this entry.</text>
</comment>
<comment type="similarity">
    <text evidence="21">Belongs to the aerobic coproporphyrinogen-III oxidase family.</text>
</comment>
<comment type="sequence caution" evidence="21">
    <conflict type="erroneous initiation">
        <sequence resource="EMBL-CDS" id="BAA04033"/>
    </conflict>
    <text>Truncated N-terminus.</text>
</comment>
<organism>
    <name type="scientific">Homo sapiens</name>
    <name type="common">Human</name>
    <dbReference type="NCBI Taxonomy" id="9606"/>
    <lineage>
        <taxon>Eukaryota</taxon>
        <taxon>Metazoa</taxon>
        <taxon>Chordata</taxon>
        <taxon>Craniata</taxon>
        <taxon>Vertebrata</taxon>
        <taxon>Euteleostomi</taxon>
        <taxon>Mammalia</taxon>
        <taxon>Eutheria</taxon>
        <taxon>Euarchontoglires</taxon>
        <taxon>Primates</taxon>
        <taxon>Haplorrhini</taxon>
        <taxon>Catarrhini</taxon>
        <taxon>Hominidae</taxon>
        <taxon>Homo</taxon>
    </lineage>
</organism>
<accession>P36551</accession>
<accession>A8K275</accession>
<accession>B4DSD5</accession>
<accession>Q14060</accession>
<accession>Q53F08</accession>
<accession>Q8IZ45</accession>
<accession>Q96AF3</accession>
<dbReference type="EC" id="1.3.3.3" evidence="13"/>
<dbReference type="EMBL" id="Z34531">
    <property type="protein sequence ID" value="CAA84292.1"/>
    <property type="molecule type" value="Genomic_DNA"/>
</dbReference>
<dbReference type="EMBL" id="Z34803">
    <property type="protein sequence ID" value="CAA84292.1"/>
    <property type="status" value="JOINED"/>
    <property type="molecule type" value="Genomic_DNA"/>
</dbReference>
<dbReference type="EMBL" id="Z34804">
    <property type="protein sequence ID" value="CAA84292.1"/>
    <property type="status" value="JOINED"/>
    <property type="molecule type" value="Genomic_DNA"/>
</dbReference>
<dbReference type="EMBL" id="Z34805">
    <property type="protein sequence ID" value="CAA84292.1"/>
    <property type="status" value="JOINED"/>
    <property type="molecule type" value="Genomic_DNA"/>
</dbReference>
<dbReference type="EMBL" id="Z34806">
    <property type="protein sequence ID" value="CAA84292.1"/>
    <property type="status" value="JOINED"/>
    <property type="molecule type" value="Genomic_DNA"/>
</dbReference>
<dbReference type="EMBL" id="Z34807">
    <property type="protein sequence ID" value="CAA84292.1"/>
    <property type="status" value="JOINED"/>
    <property type="molecule type" value="Genomic_DNA"/>
</dbReference>
<dbReference type="EMBL" id="Z34808">
    <property type="protein sequence ID" value="CAA84292.1"/>
    <property type="status" value="JOINED"/>
    <property type="molecule type" value="Genomic_DNA"/>
</dbReference>
<dbReference type="EMBL" id="AK290140">
    <property type="protein sequence ID" value="BAF82829.1"/>
    <property type="molecule type" value="mRNA"/>
</dbReference>
<dbReference type="EMBL" id="AK299692">
    <property type="protein sequence ID" value="BAG61597.1"/>
    <property type="molecule type" value="mRNA"/>
</dbReference>
<dbReference type="EMBL" id="AK223481">
    <property type="protein sequence ID" value="BAD97201.1"/>
    <property type="molecule type" value="mRNA"/>
</dbReference>
<dbReference type="EMBL" id="CH471052">
    <property type="protein sequence ID" value="EAW79854.1"/>
    <property type="molecule type" value="Genomic_DNA"/>
</dbReference>
<dbReference type="EMBL" id="BC017210">
    <property type="protein sequence ID" value="AAH17210.1"/>
    <property type="molecule type" value="mRNA"/>
</dbReference>
<dbReference type="EMBL" id="BC023551">
    <property type="protein sequence ID" value="AAH23551.1"/>
    <property type="molecule type" value="mRNA"/>
</dbReference>
<dbReference type="EMBL" id="BC023554">
    <property type="protein sequence ID" value="AAH23554.1"/>
    <property type="molecule type" value="mRNA"/>
</dbReference>
<dbReference type="EMBL" id="D16611">
    <property type="protein sequence ID" value="BAA04033.1"/>
    <property type="status" value="ALT_INIT"/>
    <property type="molecule type" value="mRNA"/>
</dbReference>
<dbReference type="EMBL" id="Z28409">
    <property type="protein sequence ID" value="CAA82250.1"/>
    <property type="molecule type" value="mRNA"/>
</dbReference>
<dbReference type="CCDS" id="CCDS2932.1">
    <molecule id="P36551-1"/>
</dbReference>
<dbReference type="PIR" id="I52444">
    <property type="entry name" value="I52444"/>
</dbReference>
<dbReference type="RefSeq" id="NP_000088.3">
    <molecule id="P36551-1"/>
    <property type="nucleotide sequence ID" value="NM_000097.5"/>
</dbReference>
<dbReference type="PDB" id="2AEX">
    <property type="method" value="X-ray"/>
    <property type="resolution" value="1.58 A"/>
    <property type="chains" value="A=111-454"/>
</dbReference>
<dbReference type="PDBsum" id="2AEX"/>
<dbReference type="SMR" id="P36551"/>
<dbReference type="BioGRID" id="107763">
    <property type="interactions" value="105"/>
</dbReference>
<dbReference type="FunCoup" id="P36551">
    <property type="interactions" value="2295"/>
</dbReference>
<dbReference type="IntAct" id="P36551">
    <property type="interactions" value="33"/>
</dbReference>
<dbReference type="MINT" id="P36551"/>
<dbReference type="STRING" id="9606.ENSP00000497326"/>
<dbReference type="ChEMBL" id="CHEMBL1681618"/>
<dbReference type="GlyGen" id="P36551">
    <property type="glycosylation" value="2 sites, 1 N-linked glycan (1 site), 1 O-linked glycan (1 site)"/>
</dbReference>
<dbReference type="iPTMnet" id="P36551"/>
<dbReference type="PhosphoSitePlus" id="P36551"/>
<dbReference type="SwissPalm" id="P36551"/>
<dbReference type="BioMuta" id="CPOX"/>
<dbReference type="DMDM" id="67476671"/>
<dbReference type="jPOST" id="P36551"/>
<dbReference type="MassIVE" id="P36551"/>
<dbReference type="PaxDb" id="9606-ENSP00000264193"/>
<dbReference type="PeptideAtlas" id="P36551"/>
<dbReference type="ProteomicsDB" id="55213">
    <molecule id="P36551-1"/>
</dbReference>
<dbReference type="Pumba" id="P36551"/>
<dbReference type="Antibodypedia" id="2788">
    <property type="antibodies" value="158 antibodies from 29 providers"/>
</dbReference>
<dbReference type="DNASU" id="1371"/>
<dbReference type="Ensembl" id="ENST00000647941.2">
    <molecule id="P36551-1"/>
    <property type="protein sequence ID" value="ENSP00000497326.1"/>
    <property type="gene ID" value="ENSG00000080819.9"/>
</dbReference>
<dbReference type="GeneID" id="1371"/>
<dbReference type="KEGG" id="hsa:1371"/>
<dbReference type="MANE-Select" id="ENST00000647941.2">
    <property type="protein sequence ID" value="ENSP00000497326.1"/>
    <property type="RefSeq nucleotide sequence ID" value="NM_000097.7"/>
    <property type="RefSeq protein sequence ID" value="NP_000088.3"/>
</dbReference>
<dbReference type="UCSC" id="uc003dsx.4">
    <molecule id="P36551-1"/>
    <property type="organism name" value="human"/>
</dbReference>
<dbReference type="AGR" id="HGNC:2321"/>
<dbReference type="CTD" id="1371"/>
<dbReference type="DisGeNET" id="1371"/>
<dbReference type="GeneCards" id="CPOX"/>
<dbReference type="GeneReviews" id="CPOX"/>
<dbReference type="HGNC" id="HGNC:2321">
    <property type="gene designation" value="CPOX"/>
</dbReference>
<dbReference type="HPA" id="ENSG00000080819">
    <property type="expression patterns" value="Low tissue specificity"/>
</dbReference>
<dbReference type="MalaCards" id="CPOX"/>
<dbReference type="MIM" id="121300">
    <property type="type" value="phenotype"/>
</dbReference>
<dbReference type="MIM" id="612732">
    <property type="type" value="gene"/>
</dbReference>
<dbReference type="MIM" id="618892">
    <property type="type" value="phenotype"/>
</dbReference>
<dbReference type="neXtProt" id="NX_P36551"/>
<dbReference type="OpenTargets" id="ENSG00000080819"/>
<dbReference type="Orphanet" id="659672">
    <property type="disease" value="Harderoporphyria"/>
</dbReference>
<dbReference type="Orphanet" id="79273">
    <property type="disease" value="Hereditary coproporphyria"/>
</dbReference>
<dbReference type="PharmGKB" id="PA134979958"/>
<dbReference type="VEuPathDB" id="HostDB:ENSG00000080819"/>
<dbReference type="eggNOG" id="KOG1518">
    <property type="taxonomic scope" value="Eukaryota"/>
</dbReference>
<dbReference type="GeneTree" id="ENSGT00390000017311"/>
<dbReference type="HOGENOM" id="CLU_026169_1_0_1"/>
<dbReference type="InParanoid" id="P36551"/>
<dbReference type="OMA" id="VHANWRY"/>
<dbReference type="OrthoDB" id="15318at2759"/>
<dbReference type="PAN-GO" id="P36551">
    <property type="GO annotations" value="4 GO annotations based on evolutionary models"/>
</dbReference>
<dbReference type="PhylomeDB" id="P36551"/>
<dbReference type="TreeFam" id="TF300703"/>
<dbReference type="BioCyc" id="MetaCyc:HS01369-MONOMER"/>
<dbReference type="BRENDA" id="1.3.3.3">
    <property type="organism ID" value="2681"/>
</dbReference>
<dbReference type="PathwayCommons" id="P36551"/>
<dbReference type="Reactome" id="R-HSA-189451">
    <property type="pathway name" value="Heme biosynthesis"/>
</dbReference>
<dbReference type="SignaLink" id="P36551"/>
<dbReference type="UniPathway" id="UPA00251">
    <property type="reaction ID" value="UER00322"/>
</dbReference>
<dbReference type="BioGRID-ORCS" id="1371">
    <property type="hits" value="227 hits in 1175 CRISPR screens"/>
</dbReference>
<dbReference type="ChiTaRS" id="CPOX">
    <property type="organism name" value="human"/>
</dbReference>
<dbReference type="EvolutionaryTrace" id="P36551"/>
<dbReference type="GeneWiki" id="Coproporphyrinogen_III_oxidase"/>
<dbReference type="GenomeRNAi" id="1371"/>
<dbReference type="Pharos" id="P36551">
    <property type="development level" value="Tbio"/>
</dbReference>
<dbReference type="PRO" id="PR:P36551"/>
<dbReference type="Proteomes" id="UP000005640">
    <property type="component" value="Chromosome 3"/>
</dbReference>
<dbReference type="RNAct" id="P36551">
    <property type="molecule type" value="protein"/>
</dbReference>
<dbReference type="Bgee" id="ENSG00000080819">
    <property type="expression patterns" value="Expressed in trabecular bone tissue and 185 other cell types or tissues"/>
</dbReference>
<dbReference type="ExpressionAtlas" id="P36551">
    <property type="expression patterns" value="baseline and differential"/>
</dbReference>
<dbReference type="GO" id="GO:0005737">
    <property type="term" value="C:cytoplasm"/>
    <property type="evidence" value="ECO:0000318"/>
    <property type="project" value="GO_Central"/>
</dbReference>
<dbReference type="GO" id="GO:0005829">
    <property type="term" value="C:cytosol"/>
    <property type="evidence" value="ECO:0000314"/>
    <property type="project" value="HPA"/>
</dbReference>
<dbReference type="GO" id="GO:0005743">
    <property type="term" value="C:mitochondrial inner membrane"/>
    <property type="evidence" value="ECO:0007669"/>
    <property type="project" value="Ensembl"/>
</dbReference>
<dbReference type="GO" id="GO:0005758">
    <property type="term" value="C:mitochondrial intermembrane space"/>
    <property type="evidence" value="ECO:0000250"/>
    <property type="project" value="UniProt"/>
</dbReference>
<dbReference type="GO" id="GO:0005739">
    <property type="term" value="C:mitochondrion"/>
    <property type="evidence" value="ECO:0000314"/>
    <property type="project" value="HPA"/>
</dbReference>
<dbReference type="GO" id="GO:0004109">
    <property type="term" value="F:coproporphyrinogen oxidase activity"/>
    <property type="evidence" value="ECO:0000314"/>
    <property type="project" value="UniProtKB"/>
</dbReference>
<dbReference type="GO" id="GO:0042803">
    <property type="term" value="F:protein homodimerization activity"/>
    <property type="evidence" value="ECO:0000314"/>
    <property type="project" value="UniProtKB"/>
</dbReference>
<dbReference type="GO" id="GO:0005212">
    <property type="term" value="F:structural constituent of eye lens"/>
    <property type="evidence" value="ECO:0007669"/>
    <property type="project" value="Ensembl"/>
</dbReference>
<dbReference type="GO" id="GO:0006784">
    <property type="term" value="P:heme A biosynthetic process"/>
    <property type="evidence" value="ECO:0007669"/>
    <property type="project" value="Ensembl"/>
</dbReference>
<dbReference type="GO" id="GO:0006785">
    <property type="term" value="P:heme B biosynthetic process"/>
    <property type="evidence" value="ECO:0000314"/>
    <property type="project" value="UniProt"/>
</dbReference>
<dbReference type="GO" id="GO:0006783">
    <property type="term" value="P:heme biosynthetic process"/>
    <property type="evidence" value="ECO:0000304"/>
    <property type="project" value="ProtInc"/>
</dbReference>
<dbReference type="GO" id="GO:0048034">
    <property type="term" value="P:heme O biosynthetic process"/>
    <property type="evidence" value="ECO:0007669"/>
    <property type="project" value="Ensembl"/>
</dbReference>
<dbReference type="GO" id="GO:0006782">
    <property type="term" value="P:protoporphyrinogen IX biosynthetic process"/>
    <property type="evidence" value="ECO:0000314"/>
    <property type="project" value="UniProt"/>
</dbReference>
<dbReference type="GO" id="GO:0046685">
    <property type="term" value="P:response to arsenic-containing substance"/>
    <property type="evidence" value="ECO:0007669"/>
    <property type="project" value="Ensembl"/>
</dbReference>
<dbReference type="GO" id="GO:0017085">
    <property type="term" value="P:response to insecticide"/>
    <property type="evidence" value="ECO:0007669"/>
    <property type="project" value="Ensembl"/>
</dbReference>
<dbReference type="GO" id="GO:0010039">
    <property type="term" value="P:response to iron ion"/>
    <property type="evidence" value="ECO:0007669"/>
    <property type="project" value="Ensembl"/>
</dbReference>
<dbReference type="GO" id="GO:0010288">
    <property type="term" value="P:response to lead ion"/>
    <property type="evidence" value="ECO:0007669"/>
    <property type="project" value="Ensembl"/>
</dbReference>
<dbReference type="GO" id="GO:0051597">
    <property type="term" value="P:response to methylmercury"/>
    <property type="evidence" value="ECO:0007669"/>
    <property type="project" value="Ensembl"/>
</dbReference>
<dbReference type="FunFam" id="3.40.1500.10:FF:000002">
    <property type="entry name" value="oxygen-dependent coproporphyrinogen-III oxidase, mitochondrial"/>
    <property type="match status" value="1"/>
</dbReference>
<dbReference type="Gene3D" id="3.40.1500.10">
    <property type="entry name" value="Coproporphyrinogen III oxidase, aerobic"/>
    <property type="match status" value="1"/>
</dbReference>
<dbReference type="InterPro" id="IPR001260">
    <property type="entry name" value="Coprogen_oxidase_aer"/>
</dbReference>
<dbReference type="InterPro" id="IPR036406">
    <property type="entry name" value="Coprogen_oxidase_aer_sf"/>
</dbReference>
<dbReference type="InterPro" id="IPR018375">
    <property type="entry name" value="Coprogen_oxidase_CS"/>
</dbReference>
<dbReference type="NCBIfam" id="NF003727">
    <property type="entry name" value="PRK05330.1"/>
    <property type="match status" value="1"/>
</dbReference>
<dbReference type="PANTHER" id="PTHR10755">
    <property type="entry name" value="COPROPORPHYRINOGEN III OXIDASE, MITOCHONDRIAL"/>
    <property type="match status" value="1"/>
</dbReference>
<dbReference type="PANTHER" id="PTHR10755:SF0">
    <property type="entry name" value="OXYGEN-DEPENDENT COPROPORPHYRINOGEN-III OXIDASE, MITOCHONDRIAL"/>
    <property type="match status" value="1"/>
</dbReference>
<dbReference type="Pfam" id="PF01218">
    <property type="entry name" value="Coprogen_oxidas"/>
    <property type="match status" value="1"/>
</dbReference>
<dbReference type="PRINTS" id="PR00073">
    <property type="entry name" value="COPRGNOXDASE"/>
</dbReference>
<dbReference type="SUPFAM" id="SSF102886">
    <property type="entry name" value="Coproporphyrinogen III oxidase"/>
    <property type="match status" value="1"/>
</dbReference>
<dbReference type="PROSITE" id="PS01021">
    <property type="entry name" value="COPROGEN_OXIDASE"/>
    <property type="match status" value="1"/>
</dbReference>
<reference key="1">
    <citation type="journal article" date="1994" name="Hum. Mol. Genet.">
        <title>Coproporphyrinogen oxidase: gene organization and description of a mutation leading to exon 6 skipping.</title>
        <authorList>
            <person name="Delfau-Larue M.H."/>
            <person name="Martasek P."/>
            <person name="Grandchamp B."/>
        </authorList>
    </citation>
    <scope>NUCLEOTIDE SEQUENCE [GENOMIC DNA]</scope>
    <scope>FUNCTION</scope>
    <scope>CATALYTIC ACTIVITY</scope>
    <source>
        <tissue>Placenta</tissue>
    </source>
</reference>
<reference key="2">
    <citation type="journal article" date="2004" name="Nat. Genet.">
        <title>Complete sequencing and characterization of 21,243 full-length human cDNAs.</title>
        <authorList>
            <person name="Ota T."/>
            <person name="Suzuki Y."/>
            <person name="Nishikawa T."/>
            <person name="Otsuki T."/>
            <person name="Sugiyama T."/>
            <person name="Irie R."/>
            <person name="Wakamatsu A."/>
            <person name="Hayashi K."/>
            <person name="Sato H."/>
            <person name="Nagai K."/>
            <person name="Kimura K."/>
            <person name="Makita H."/>
            <person name="Sekine M."/>
            <person name="Obayashi M."/>
            <person name="Nishi T."/>
            <person name="Shibahara T."/>
            <person name="Tanaka T."/>
            <person name="Ishii S."/>
            <person name="Yamamoto J."/>
            <person name="Saito K."/>
            <person name="Kawai Y."/>
            <person name="Isono Y."/>
            <person name="Nakamura Y."/>
            <person name="Nagahari K."/>
            <person name="Murakami K."/>
            <person name="Yasuda T."/>
            <person name="Iwayanagi T."/>
            <person name="Wagatsuma M."/>
            <person name="Shiratori A."/>
            <person name="Sudo H."/>
            <person name="Hosoiri T."/>
            <person name="Kaku Y."/>
            <person name="Kodaira H."/>
            <person name="Kondo H."/>
            <person name="Sugawara M."/>
            <person name="Takahashi M."/>
            <person name="Kanda K."/>
            <person name="Yokoi T."/>
            <person name="Furuya T."/>
            <person name="Kikkawa E."/>
            <person name="Omura Y."/>
            <person name="Abe K."/>
            <person name="Kamihara K."/>
            <person name="Katsuta N."/>
            <person name="Sato K."/>
            <person name="Tanikawa M."/>
            <person name="Yamazaki M."/>
            <person name="Ninomiya K."/>
            <person name="Ishibashi T."/>
            <person name="Yamashita H."/>
            <person name="Murakawa K."/>
            <person name="Fujimori K."/>
            <person name="Tanai H."/>
            <person name="Kimata M."/>
            <person name="Watanabe M."/>
            <person name="Hiraoka S."/>
            <person name="Chiba Y."/>
            <person name="Ishida S."/>
            <person name="Ono Y."/>
            <person name="Takiguchi S."/>
            <person name="Watanabe S."/>
            <person name="Yosida M."/>
            <person name="Hotuta T."/>
            <person name="Kusano J."/>
            <person name="Kanehori K."/>
            <person name="Takahashi-Fujii A."/>
            <person name="Hara H."/>
            <person name="Tanase T.-O."/>
            <person name="Nomura Y."/>
            <person name="Togiya S."/>
            <person name="Komai F."/>
            <person name="Hara R."/>
            <person name="Takeuchi K."/>
            <person name="Arita M."/>
            <person name="Imose N."/>
            <person name="Musashino K."/>
            <person name="Yuuki H."/>
            <person name="Oshima A."/>
            <person name="Sasaki N."/>
            <person name="Aotsuka S."/>
            <person name="Yoshikawa Y."/>
            <person name="Matsunawa H."/>
            <person name="Ichihara T."/>
            <person name="Shiohata N."/>
            <person name="Sano S."/>
            <person name="Moriya S."/>
            <person name="Momiyama H."/>
            <person name="Satoh N."/>
            <person name="Takami S."/>
            <person name="Terashima Y."/>
            <person name="Suzuki O."/>
            <person name="Nakagawa S."/>
            <person name="Senoh A."/>
            <person name="Mizoguchi H."/>
            <person name="Goto Y."/>
            <person name="Shimizu F."/>
            <person name="Wakebe H."/>
            <person name="Hishigaki H."/>
            <person name="Watanabe T."/>
            <person name="Sugiyama A."/>
            <person name="Takemoto M."/>
            <person name="Kawakami B."/>
            <person name="Yamazaki M."/>
            <person name="Watanabe K."/>
            <person name="Kumagai A."/>
            <person name="Itakura S."/>
            <person name="Fukuzumi Y."/>
            <person name="Fujimori Y."/>
            <person name="Komiyama M."/>
            <person name="Tashiro H."/>
            <person name="Tanigami A."/>
            <person name="Fujiwara T."/>
            <person name="Ono T."/>
            <person name="Yamada K."/>
            <person name="Fujii Y."/>
            <person name="Ozaki K."/>
            <person name="Hirao M."/>
            <person name="Ohmori Y."/>
            <person name="Kawabata A."/>
            <person name="Hikiji T."/>
            <person name="Kobatake N."/>
            <person name="Inagaki H."/>
            <person name="Ikema Y."/>
            <person name="Okamoto S."/>
            <person name="Okitani R."/>
            <person name="Kawakami T."/>
            <person name="Noguchi S."/>
            <person name="Itoh T."/>
            <person name="Shigeta K."/>
            <person name="Senba T."/>
            <person name="Matsumura K."/>
            <person name="Nakajima Y."/>
            <person name="Mizuno T."/>
            <person name="Morinaga M."/>
            <person name="Sasaki M."/>
            <person name="Togashi T."/>
            <person name="Oyama M."/>
            <person name="Hata H."/>
            <person name="Watanabe M."/>
            <person name="Komatsu T."/>
            <person name="Mizushima-Sugano J."/>
            <person name="Satoh T."/>
            <person name="Shirai Y."/>
            <person name="Takahashi Y."/>
            <person name="Nakagawa K."/>
            <person name="Okumura K."/>
            <person name="Nagase T."/>
            <person name="Nomura N."/>
            <person name="Kikuchi H."/>
            <person name="Masuho Y."/>
            <person name="Yamashita R."/>
            <person name="Nakai K."/>
            <person name="Yada T."/>
            <person name="Nakamura Y."/>
            <person name="Ohara O."/>
            <person name="Isogai T."/>
            <person name="Sugano S."/>
        </authorList>
    </citation>
    <scope>NUCLEOTIDE SEQUENCE [LARGE SCALE MRNA] (ISOFORMS 1 AND 2)</scope>
    <source>
        <tissue>Brain</tissue>
        <tissue>Thalamus</tissue>
    </source>
</reference>
<reference key="3">
    <citation type="submission" date="2005-04" db="EMBL/GenBank/DDBJ databases">
        <authorList>
            <person name="Totoki Y."/>
            <person name="Toyoda A."/>
            <person name="Takeda T."/>
            <person name="Sakaki Y."/>
            <person name="Tanaka A."/>
            <person name="Yokoyama S."/>
        </authorList>
    </citation>
    <scope>NUCLEOTIDE SEQUENCE [LARGE SCALE MRNA] (ISOFORM 1)</scope>
    <scope>VARIANT ILE-294</scope>
</reference>
<reference key="4">
    <citation type="submission" date="2005-09" db="EMBL/GenBank/DDBJ databases">
        <authorList>
            <person name="Mural R.J."/>
            <person name="Istrail S."/>
            <person name="Sutton G.G."/>
            <person name="Florea L."/>
            <person name="Halpern A.L."/>
            <person name="Mobarry C.M."/>
            <person name="Lippert R."/>
            <person name="Walenz B."/>
            <person name="Shatkay H."/>
            <person name="Dew I."/>
            <person name="Miller J.R."/>
            <person name="Flanigan M.J."/>
            <person name="Edwards N.J."/>
            <person name="Bolanos R."/>
            <person name="Fasulo D."/>
            <person name="Halldorsson B.V."/>
            <person name="Hannenhalli S."/>
            <person name="Turner R."/>
            <person name="Yooseph S."/>
            <person name="Lu F."/>
            <person name="Nusskern D.R."/>
            <person name="Shue B.C."/>
            <person name="Zheng X.H."/>
            <person name="Zhong F."/>
            <person name="Delcher A.L."/>
            <person name="Huson D.H."/>
            <person name="Kravitz S.A."/>
            <person name="Mouchard L."/>
            <person name="Reinert K."/>
            <person name="Remington K.A."/>
            <person name="Clark A.G."/>
            <person name="Waterman M.S."/>
            <person name="Eichler E.E."/>
            <person name="Adams M.D."/>
            <person name="Hunkapiller M.W."/>
            <person name="Myers E.W."/>
            <person name="Venter J.C."/>
        </authorList>
    </citation>
    <scope>NUCLEOTIDE SEQUENCE [LARGE SCALE GENOMIC DNA]</scope>
</reference>
<reference key="5">
    <citation type="journal article" date="2004" name="Genome Res.">
        <title>The status, quality, and expansion of the NIH full-length cDNA project: the Mammalian Gene Collection (MGC).</title>
        <authorList>
            <consortium name="The MGC Project Team"/>
        </authorList>
    </citation>
    <scope>NUCLEOTIDE SEQUENCE [LARGE SCALE MRNA] (ISOFORM 1)</scope>
    <scope>VARIANT ILE-294</scope>
    <source>
        <tissue>Brain</tissue>
        <tissue>Placenta</tissue>
        <tissue>Uterus</tissue>
    </source>
</reference>
<reference key="6">
    <citation type="journal article" date="1994" name="Biochim. Biophys. Acta">
        <title>Molecular cloning, sequencing and expression of cDNA encoding human coproporphyrinogen oxidase.</title>
        <authorList>
            <person name="Taketani S."/>
            <person name="Kohno H."/>
            <person name="Furukawa T."/>
            <person name="Yoshinaga T."/>
            <person name="Tokunaga R."/>
        </authorList>
    </citation>
    <scope>NUCLEOTIDE SEQUENCE [MRNA] OF 73-454 (ISOFORM 1)</scope>
    <source>
        <tissue>Placenta</tissue>
    </source>
</reference>
<reference key="7">
    <citation type="journal article" date="1994" name="Proc. Natl. Acad. Sci. U.S.A.">
        <title>Molecular cloning, sequencing, and functional expression of a cDNA encoding human coproporphyrinogen oxidase.</title>
        <authorList>
            <person name="Martasek P."/>
            <person name="Camadro J.-M."/>
            <person name="Delfau-Larue M.H."/>
            <person name="Dumas J.B."/>
            <person name="Montagne J.J."/>
            <person name="de Verneuil H."/>
            <person name="Labbe P."/>
            <person name="Grandchamp B."/>
        </authorList>
    </citation>
    <scope>NUCLEOTIDE SEQUENCE [MRNA] OF 101-454 (ISOFORM 1)</scope>
    <scope>VARIANT HIS-272</scope>
    <scope>FUNCTION</scope>
    <scope>CATALYTIC ACTIVITY</scope>
    <source>
        <tissue>Foreskin</tissue>
    </source>
</reference>
<reference key="8">
    <citation type="journal article" date="2003" name="Tohoku J. Exp. Med.">
        <title>The long, but not the short, presequence of human coproporphyrinogen oxidase is essential for its import and sorting to mitochondria.</title>
        <authorList>
            <person name="Susa S."/>
            <person name="Daimon M."/>
            <person name="Ono H."/>
            <person name="Li S."/>
            <person name="Yoshida T."/>
            <person name="Kato T."/>
        </authorList>
    </citation>
    <scope>PROTEOLYTIC PROCESSING</scope>
</reference>
<reference key="9">
    <citation type="journal article" date="2011" name="BMC Syst. Biol.">
        <title>Initial characterization of the human central proteome.</title>
        <authorList>
            <person name="Burkard T.R."/>
            <person name="Planyavsky M."/>
            <person name="Kaupe I."/>
            <person name="Breitwieser F.P."/>
            <person name="Buerckstuemmer T."/>
            <person name="Bennett K.L."/>
            <person name="Superti-Furga G."/>
            <person name="Colinge J."/>
        </authorList>
    </citation>
    <scope>IDENTIFICATION BY MASS SPECTROMETRY [LARGE SCALE ANALYSIS]</scope>
</reference>
<reference key="10">
    <citation type="journal article" date="2013" name="J. Proteome Res.">
        <title>Toward a comprehensive characterization of a human cancer cell phosphoproteome.</title>
        <authorList>
            <person name="Zhou H."/>
            <person name="Di Palma S."/>
            <person name="Preisinger C."/>
            <person name="Peng M."/>
            <person name="Polat A.N."/>
            <person name="Heck A.J."/>
            <person name="Mohammed S."/>
        </authorList>
    </citation>
    <scope>IDENTIFICATION BY MASS SPECTROMETRY [LARGE SCALE ANALYSIS]</scope>
    <source>
        <tissue>Erythroleukemia</tissue>
    </source>
</reference>
<reference key="11">
    <citation type="journal article" date="2014" name="J. Proteomics">
        <title>An enzyme assisted RP-RPLC approach for in-depth analysis of human liver phosphoproteome.</title>
        <authorList>
            <person name="Bian Y."/>
            <person name="Song C."/>
            <person name="Cheng K."/>
            <person name="Dong M."/>
            <person name="Wang F."/>
            <person name="Huang J."/>
            <person name="Sun D."/>
            <person name="Wang L."/>
            <person name="Ye M."/>
            <person name="Zou H."/>
        </authorList>
    </citation>
    <scope>IDENTIFICATION BY MASS SPECTROMETRY [LARGE SCALE ANALYSIS]</scope>
    <source>
        <tissue>Liver</tissue>
    </source>
</reference>
<reference key="12">
    <citation type="journal article" date="2015" name="Proteomics">
        <title>N-terminome analysis of the human mitochondrial proteome.</title>
        <authorList>
            <person name="Vaca Jacome A.S."/>
            <person name="Rabilloud T."/>
            <person name="Schaeffer-Reiss C."/>
            <person name="Rompais M."/>
            <person name="Ayoub D."/>
            <person name="Lane L."/>
            <person name="Bairoch A."/>
            <person name="Van Dorsselaer A."/>
            <person name="Carapito C."/>
        </authorList>
    </citation>
    <scope>IDENTIFICATION BY MASS SPECTROMETRY [LARGE SCALE ANALYSIS]</scope>
</reference>
<reference key="13">
    <citation type="journal article" date="1994" name="Hum. Mol. Genet.">
        <title>Homozygous hereditary coproporphyria caused by an arginine to tryptophan substitution in coproporphyrinogen oxidase and common intragenic polymorphisms.</title>
        <authorList>
            <person name="Martasek P."/>
            <person name="Nordmann Y."/>
            <person name="Grandchamp B."/>
        </authorList>
    </citation>
    <scope>INVOLVEMENT IN HCP</scope>
    <scope>VARIANT HCP TRP-331</scope>
</reference>
<reference key="14">
    <citation type="journal article" date="2011" name="J. Inherit. Metab. Dis.">
        <title>Harderoporphyria due to homozygosity for coproporphyrinogen oxidase missense mutation H327R.</title>
        <authorList>
            <person name="Hasanoglu A."/>
            <person name="Balwani M."/>
            <person name="Kasapkara C.S."/>
            <person name="Ezgue F.S."/>
            <person name="Okur I."/>
            <person name="Tuemer L."/>
            <person name="Cakmak A."/>
            <person name="Nazarenko I."/>
            <person name="Yu C."/>
            <person name="Clavero S."/>
            <person name="Bishop D.F."/>
            <person name="Desnick R.J."/>
        </authorList>
    </citation>
    <scope>INVOLVEMENT IN HARPO</scope>
    <scope>VARIANT HARPO ARG-327</scope>
</reference>
<reference key="15">
    <citation type="journal article" date="2005" name="Proc. Natl. Acad. Sci. U.S.A.">
        <title>Structural basis of hereditary coproporphyria.</title>
        <authorList>
            <person name="Lee D.-S."/>
            <person name="Flachsova E."/>
            <person name="Bodnarova M."/>
            <person name="Demeler B."/>
            <person name="Martasek P."/>
            <person name="Raman C.S."/>
        </authorList>
    </citation>
    <scope>X-RAY CRYSTALLOGRAPHY (1.58 ANGSTROMS) OF 111-453 IN COMPLEX WITH CITRATE</scope>
    <scope>MUTAGENESIS OF 392-TYR--LEU-418</scope>
    <scope>ACTIVE SITE</scope>
    <scope>SUBUNIT</scope>
</reference>
<reference key="16">
    <citation type="journal article" date="1994" name="Hum. Mol. Genet.">
        <title>Characterization and expression of cDNA encoding coproporphyrinogen oxidase from a patient with hereditary coproporphyria.</title>
        <authorList>
            <person name="Fujita H."/>
            <person name="Kondo M."/>
            <person name="Taketani S."/>
            <person name="Nomura N."/>
            <person name="Furuyama K."/>
            <person name="Akagi R."/>
            <person name="Nagai T."/>
            <person name="Terajima M."/>
            <person name="Galbraith R.A."/>
            <person name="Sassa S."/>
        </authorList>
    </citation>
    <scope>VARIANT HCP SER-189</scope>
    <scope>VARIANTS HIS-272 AND ILE-294</scope>
</reference>
<reference key="17">
    <citation type="journal article" date="1995" name="Hum. Mol. Genet.">
        <title>A molecular defect in coproporphyrinogen oxidase gene causing harderoporphyria, a variant form of hereditary coproporphyria.</title>
        <authorList>
            <person name="Lamoril J."/>
            <person name="Martasek P."/>
            <person name="Deybach J.-C."/>
            <person name="da Silva V."/>
            <person name="Grandchamp B."/>
            <person name="Nordmann Y."/>
        </authorList>
    </citation>
    <scope>VARIANT HARPO GLU-404</scope>
</reference>
<reference key="18">
    <citation type="journal article" date="1997" name="Hum. Genet.">
        <title>A novel missense mutation in exon 4 of the human coproporphyrinogen oxidase gene in two patients with hereditary coproporphyria.</title>
        <authorList>
            <person name="Daimon M."/>
            <person name="Gojyou E."/>
            <person name="Sugawara M."/>
            <person name="Yamatani K."/>
            <person name="Tominaga M."/>
            <person name="Sasaki H."/>
        </authorList>
    </citation>
    <scope>VARIANT HCP ARG-280</scope>
</reference>
<reference key="19">
    <citation type="journal article" date="1997" name="Hum. Mutat.">
        <title>Three novel mutations in the coproporphyrinogen oxidase gene.</title>
        <authorList>
            <person name="Lamoril J."/>
            <person name="Deybach J.-C."/>
            <person name="Puy H."/>
            <person name="Grandchamp B."/>
            <person name="Nordmann Y."/>
        </authorList>
    </citation>
    <scope>VARIANTS HCP 162-GLN--ALA-168 DEL AND ASP-295</scope>
</reference>
<reference key="20">
    <citation type="journal article" date="1997" name="Hum. Mutat.">
        <title>Hereditary coproporphyria: exon screening by heteroduplex analysis detects three novel mutations in the coproporphyrinogen oxidase gene.</title>
        <authorList>
            <person name="Schreiber W.E."/>
            <person name="Zhang X."/>
            <person name="Senz J."/>
            <person name="Jamani A."/>
        </authorList>
    </citation>
    <scope>VARIANTS HCP LYS-201 AND SER-249</scope>
</reference>
<reference key="21">
    <citation type="journal article" date="1998" name="Am. J. Med. Genet.">
        <title>Identification of a novel mutation of the CPO gene in a Japanese hereditary coproporphyria family.</title>
        <authorList>
            <person name="Susa S."/>
            <person name="Daimon M."/>
            <person name="Kondo H."/>
            <person name="Kondo M."/>
            <person name="Yamatani K."/>
            <person name="Sasaki H."/>
        </authorList>
    </citation>
    <scope>VARIANT HCP 29-GLN--ARG-454 DEL</scope>
</reference>
<reference key="22">
    <citation type="journal article" date="1999" name="Hum. Mutat.">
        <title>Systematic analysis of coproporphyrinogen oxidase gene defects in hereditary coproporphyria and mutation update.</title>
        <authorList>
            <person name="Rosipal R."/>
            <person name="Lamoril J."/>
            <person name="Puy H."/>
            <person name="da Silva V."/>
            <person name="Gouya L."/>
            <person name="de Rooij F.W.M."/>
            <person name="Te Velde K."/>
            <person name="Nordmann Y."/>
            <person name="Martasek P."/>
            <person name="Deybach J.-C."/>
        </authorList>
    </citation>
    <scope>VARIANTS HCP TRP-197; GLY-390 DEL AND ARG-427</scope>
</reference>
<reference key="23">
    <citation type="journal article" date="2002" name="J. Hum. Genet.">
        <title>Two novel mutations and coexistence of the 991C&gt;T and the 1339C&gt;T mutation on a single allele in the coproporphyrinogen oxidase gene in Swedish patients with hereditary coproporphyria.</title>
        <authorList>
            <person name="Wiman A."/>
            <person name="Floderus Y."/>
            <person name="Harper P."/>
        </authorList>
    </citation>
    <scope>VARIANTS HCP PHE-208; CYS-328; TRP-331 AND CYS-447</scope>
</reference>
<reference key="24">
    <citation type="journal article" date="2005" name="Mol. Genet. Metab.">
        <title>Biochemical and genetic characterization of four cases of hereditary coproporphyria in Spain.</title>
        <authorList>
            <person name="To-Figueras J."/>
            <person name="Badenas C."/>
            <person name="Enriquez M.T."/>
            <person name="Segura S."/>
            <person name="Alvarez C."/>
            <person name="Mila M."/>
            <person name="Lecha M."/>
            <person name="Herrero C."/>
        </authorList>
    </citation>
    <scope>VARIANTS HCP ALA-135; ARG-214 AND ARG-249</scope>
</reference>
<reference key="25">
    <citation type="journal article" date="2006" name="Br. J. Haematol.">
        <title>Dual gene defects involving delta-aminolaevulinate dehydratase and coproporphyrinogen oxidase in a porphyria patient.</title>
        <authorList>
            <person name="Akagi R."/>
            <person name="Inoue R."/>
            <person name="Muranaka S."/>
            <person name="Tahara T."/>
            <person name="Taketani S."/>
            <person name="Anderson K.E."/>
            <person name="Phillips J.D."/>
            <person name="Sassa S."/>
        </authorList>
    </citation>
    <scope>VARIANT HCP ARG-279</scope>
</reference>
<reference key="26">
    <citation type="journal article" date="2006" name="Br. J. Haematol.">
        <authorList>
            <person name="Akagi R."/>
            <person name="Inoue R."/>
            <person name="Muranaka S."/>
            <person name="Tahara T."/>
            <person name="Taketani S."/>
            <person name="Anderson K.E."/>
            <person name="Phillips J.D."/>
            <person name="Sassa S."/>
        </authorList>
    </citation>
    <scope>ERRATUM OF PUBMED:16398658</scope>
</reference>
<gene>
    <name evidence="24" type="primary">CPOX</name>
    <name type="synonym">CPO</name>
    <name type="synonym">CPX</name>
</gene>
<proteinExistence type="evidence at protein level"/>
<feature type="transit peptide" description="Mitochondrion" evidence="1">
    <location>
        <begin position="1"/>
        <end position="110"/>
    </location>
</feature>
<feature type="chain" id="PRO_0000006029" description="Oxygen-dependent coproporphyrinogen-III oxidase, mitochondrial">
    <location>
        <begin position="111"/>
        <end position="454"/>
    </location>
</feature>
<feature type="region of interest" description="Disordered" evidence="3">
    <location>
        <begin position="43"/>
        <end position="70"/>
    </location>
</feature>
<feature type="region of interest" description="Important for dimerization" evidence="7">
    <location>
        <begin position="193"/>
        <end position="202"/>
    </location>
</feature>
<feature type="region of interest" description="Important for dimerization" evidence="7">
    <location>
        <begin position="392"/>
        <end position="428"/>
    </location>
</feature>
<feature type="active site" description="Proton donor" evidence="7">
    <location>
        <position position="258"/>
    </location>
</feature>
<feature type="binding site" evidence="22 25">
    <location>
        <position position="244"/>
    </location>
    <ligand>
        <name>coproporphyrinogen III</name>
        <dbReference type="ChEBI" id="CHEBI:57309"/>
    </ligand>
</feature>
<feature type="binding site" evidence="22 25">
    <location>
        <begin position="260"/>
        <end position="262"/>
    </location>
    <ligand>
        <name>coproporphyrinogen III</name>
        <dbReference type="ChEBI" id="CHEBI:57309"/>
    </ligand>
</feature>
<feature type="binding site" evidence="22 25">
    <location>
        <begin position="411"/>
        <end position="413"/>
    </location>
    <ligand>
        <name>coproporphyrinogen III</name>
        <dbReference type="ChEBI" id="CHEBI:57309"/>
    </ligand>
</feature>
<feature type="site" description="Important for dimerization" evidence="7">
    <location>
        <position position="327"/>
    </location>
</feature>
<feature type="modified residue" description="Phosphoserine" evidence="2">
    <location>
        <position position="112"/>
    </location>
</feature>
<feature type="modified residue" description="N6-acetyllysine; alternate" evidence="1">
    <location>
        <position position="404"/>
    </location>
</feature>
<feature type="modified residue" description="N6-succinyllysine; alternate" evidence="1">
    <location>
        <position position="404"/>
    </location>
</feature>
<feature type="splice variant" id="VSP_057182" description="In isoform 2." evidence="20">
    <original>NKQWWFGGGCDLTPTY</original>
    <variation>KGLRSYGKYCRAKCAF</variation>
    <location>
        <begin position="272"/>
        <end position="287"/>
    </location>
</feature>
<feature type="splice variant" id="VSP_057183" description="In isoform 2." evidence="20">
    <location>
        <begin position="288"/>
        <end position="454"/>
    </location>
</feature>
<feature type="sequence variant" id="VAR_084511" description="In HCP." evidence="17">
    <location>
        <begin position="29"/>
        <end position="454"/>
    </location>
</feature>
<feature type="sequence variant" id="VAR_023444" description="In HCP; dbSNP:rs201826432." evidence="6">
    <original>V</original>
    <variation>A</variation>
    <location>
        <position position="135"/>
    </location>
</feature>
<feature type="sequence variant" id="VAR_002151" description="In HCP." evidence="14">
    <location>
        <begin position="162"/>
        <end position="168"/>
    </location>
</feature>
<feature type="sequence variant" id="VAR_002152" description="In HCP; &lt;5% of activity; dbSNP:rs759347283." evidence="11">
    <original>G</original>
    <variation>S</variation>
    <location>
        <position position="189"/>
    </location>
</feature>
<feature type="sequence variant" id="VAR_002153" description="In HCP." evidence="18">
    <original>G</original>
    <variation>W</variation>
    <location>
        <position position="197"/>
    </location>
</feature>
<feature type="sequence variant" id="VAR_002154" description="In HCP; dbSNP:rs1374394802." evidence="16">
    <original>E</original>
    <variation>K</variation>
    <location>
        <position position="201"/>
    </location>
</feature>
<feature type="sequence variant" id="VAR_019067" description="In HCP; dbSNP:rs121917872." evidence="4">
    <original>S</original>
    <variation>F</variation>
    <location>
        <position position="208"/>
    </location>
</feature>
<feature type="sequence variant" id="VAR_023445" description="In HCP." evidence="6">
    <original>L</original>
    <variation>R</variation>
    <location>
        <position position="214"/>
    </location>
</feature>
<feature type="sequence variant" id="VAR_023446" description="In HCP." evidence="6">
    <original>P</original>
    <variation>R</variation>
    <location>
        <position position="249"/>
    </location>
</feature>
<feature type="sequence variant" id="VAR_002155" description="In HCP; dbSNP:rs1707462390." evidence="16">
    <original>P</original>
    <variation>S</variation>
    <location>
        <position position="249"/>
    </location>
</feature>
<feature type="sequence variant" id="VAR_002156" description="In dbSNP:rs1131857." evidence="11 13">
    <original>N</original>
    <variation>H</variation>
    <location>
        <position position="272"/>
    </location>
</feature>
<feature type="sequence variant" id="VAR_058005" description="In HCP; a patient carrying also the L-12 mutation in ALAD; dbSNP:rs121917874." evidence="8">
    <original>G</original>
    <variation>R</variation>
    <location>
        <position position="279"/>
    </location>
</feature>
<feature type="sequence variant" id="VAR_002157" description="In HCP; dbSNP:rs1707418564." evidence="15">
    <original>G</original>
    <variation>R</variation>
    <location>
        <position position="280"/>
    </location>
</feature>
<feature type="sequence variant" id="VAR_002158" description="In dbSNP:rs2228056." evidence="5 11 19">
    <original>V</original>
    <variation>I</variation>
    <location>
        <position position="294"/>
    </location>
</feature>
<feature type="sequence variant" id="VAR_002159" description="In HCP; dbSNP:rs121917870." evidence="14">
    <original>H</original>
    <variation>D</variation>
    <location>
        <position position="295"/>
    </location>
</feature>
<feature type="sequence variant" id="VAR_084512" description="In HARPO; dbSNP:rs587777271." evidence="9">
    <original>H</original>
    <variation>R</variation>
    <location>
        <position position="327"/>
    </location>
</feature>
<feature type="sequence variant" id="VAR_019068" description="In HCP; dbSNP:rs121917873." evidence="4">
    <original>R</original>
    <variation>C</variation>
    <location>
        <position position="328"/>
    </location>
</feature>
<feature type="sequence variant" id="VAR_002160" description="In HCP; dbSNP:rs121917866." evidence="4 12">
    <original>R</original>
    <variation>W</variation>
    <location>
        <position position="331"/>
    </location>
</feature>
<feature type="sequence variant" id="VAR_048827" description="In dbSNP:rs11921054.">
    <original>R</original>
    <variation>C</variation>
    <location>
        <position position="352"/>
    </location>
</feature>
<feature type="sequence variant" id="VAR_002161" description="In HCP." evidence="18">
    <location>
        <position position="390"/>
    </location>
</feature>
<feature type="sequence variant" id="VAR_002162" description="In HARPO; dbSNP:rs121917868." evidence="10">
    <original>K</original>
    <variation>E</variation>
    <location>
        <position position="404"/>
    </location>
</feature>
<feature type="sequence variant" id="VAR_002163" description="In HCP." evidence="18">
    <original>W</original>
    <variation>R</variation>
    <location>
        <position position="427"/>
    </location>
</feature>
<feature type="sequence variant" id="VAR_019069" description="In HCP; dbSNP:rs28931603." evidence="4">
    <original>R</original>
    <variation>C</variation>
    <location>
        <position position="447"/>
    </location>
</feature>
<feature type="mutagenesis site" description="Loss for dimerization." evidence="7">
    <location>
        <begin position="392"/>
        <end position="418"/>
    </location>
</feature>
<feature type="sequence conflict" description="In Ref. 7; CAA82250." evidence="21" ref="7">
    <original>I</original>
    <variation>T</variation>
    <location>
        <position position="247"/>
    </location>
</feature>
<feature type="helix" evidence="26">
    <location>
        <begin position="122"/>
        <end position="128"/>
    </location>
</feature>
<feature type="strand" evidence="26">
    <location>
        <begin position="130"/>
        <end position="132"/>
    </location>
</feature>
<feature type="helix" evidence="26">
    <location>
        <begin position="138"/>
        <end position="143"/>
    </location>
</feature>
<feature type="helix" evidence="26">
    <location>
        <begin position="148"/>
        <end position="170"/>
    </location>
</feature>
<feature type="strand" evidence="26">
    <location>
        <begin position="177"/>
        <end position="183"/>
    </location>
</feature>
<feature type="turn" evidence="26">
    <location>
        <begin position="184"/>
        <end position="186"/>
    </location>
</feature>
<feature type="strand" evidence="26">
    <location>
        <begin position="187"/>
        <end position="196"/>
    </location>
</feature>
<feature type="strand" evidence="26">
    <location>
        <begin position="198"/>
        <end position="213"/>
    </location>
</feature>
<feature type="helix" evidence="26">
    <location>
        <begin position="216"/>
        <end position="224"/>
    </location>
</feature>
<feature type="strand" evidence="26">
    <location>
        <begin position="237"/>
        <end position="251"/>
    </location>
</feature>
<feature type="strand" evidence="26">
    <location>
        <begin position="256"/>
        <end position="267"/>
    </location>
</feature>
<feature type="strand" evidence="26">
    <location>
        <begin position="273"/>
        <end position="284"/>
    </location>
</feature>
<feature type="helix" evidence="26">
    <location>
        <begin position="290"/>
        <end position="305"/>
    </location>
</feature>
<feature type="helix" evidence="26">
    <location>
        <begin position="311"/>
        <end position="322"/>
    </location>
</feature>
<feature type="helix" evidence="26">
    <location>
        <begin position="326"/>
        <end position="328"/>
    </location>
</feature>
<feature type="strand" evidence="26">
    <location>
        <begin position="330"/>
        <end position="342"/>
    </location>
</feature>
<feature type="helix" evidence="26">
    <location>
        <begin position="347"/>
        <end position="359"/>
    </location>
</feature>
<feature type="helix" evidence="26">
    <location>
        <begin position="361"/>
        <end position="372"/>
    </location>
</feature>
<feature type="helix" evidence="26">
    <location>
        <begin position="379"/>
        <end position="399"/>
    </location>
</feature>
<feature type="helix" evidence="26">
    <location>
        <begin position="406"/>
        <end position="408"/>
    </location>
</feature>
<feature type="strand" evidence="26">
    <location>
        <begin position="409"/>
        <end position="411"/>
    </location>
</feature>
<feature type="helix" evidence="26">
    <location>
        <begin position="414"/>
        <end position="420"/>
    </location>
</feature>
<feature type="helix" evidence="26">
    <location>
        <begin position="438"/>
        <end position="447"/>
    </location>
</feature>
<evidence type="ECO:0000250" key="1">
    <source>
        <dbReference type="UniProtKB" id="P36552"/>
    </source>
</evidence>
<evidence type="ECO:0000250" key="2">
    <source>
        <dbReference type="UniProtKB" id="Q3B7D0"/>
    </source>
</evidence>
<evidence type="ECO:0000256" key="3">
    <source>
        <dbReference type="SAM" id="MobiDB-lite"/>
    </source>
</evidence>
<evidence type="ECO:0000269" key="4">
    <source>
    </source>
</evidence>
<evidence type="ECO:0000269" key="5">
    <source>
    </source>
</evidence>
<evidence type="ECO:0000269" key="6">
    <source>
    </source>
</evidence>
<evidence type="ECO:0000269" key="7">
    <source>
    </source>
</evidence>
<evidence type="ECO:0000269" key="8">
    <source>
    </source>
</evidence>
<evidence type="ECO:0000269" key="9">
    <source>
    </source>
</evidence>
<evidence type="ECO:0000269" key="10">
    <source>
    </source>
</evidence>
<evidence type="ECO:0000269" key="11">
    <source>
    </source>
</evidence>
<evidence type="ECO:0000269" key="12">
    <source>
    </source>
</evidence>
<evidence type="ECO:0000269" key="13">
    <source>
    </source>
</evidence>
<evidence type="ECO:0000269" key="14">
    <source>
    </source>
</evidence>
<evidence type="ECO:0000269" key="15">
    <source>
    </source>
</evidence>
<evidence type="ECO:0000269" key="16">
    <source>
    </source>
</evidence>
<evidence type="ECO:0000269" key="17">
    <source>
    </source>
</evidence>
<evidence type="ECO:0000269" key="18">
    <source>
    </source>
</evidence>
<evidence type="ECO:0000269" key="19">
    <source ref="3"/>
</evidence>
<evidence type="ECO:0000303" key="20">
    <source>
    </source>
</evidence>
<evidence type="ECO:0000305" key="21"/>
<evidence type="ECO:0000305" key="22">
    <source>
    </source>
</evidence>
<evidence type="ECO:0000305" key="23">
    <source>
    </source>
</evidence>
<evidence type="ECO:0000312" key="24">
    <source>
        <dbReference type="HGNC" id="HGNC:2321"/>
    </source>
</evidence>
<evidence type="ECO:0007744" key="25">
    <source>
        <dbReference type="PDB" id="2AEX"/>
    </source>
</evidence>
<evidence type="ECO:0007829" key="26">
    <source>
        <dbReference type="PDB" id="2AEX"/>
    </source>
</evidence>
<protein>
    <recommendedName>
        <fullName evidence="21">Oxygen-dependent coproporphyrinogen-III oxidase, mitochondrial</fullName>
        <shortName>COX</shortName>
        <shortName>Coprogen oxidase</shortName>
        <shortName>Coproporphyrinogenase</shortName>
        <ecNumber evidence="13">1.3.3.3</ecNumber>
    </recommendedName>
</protein>
<name>HEM6_HUMAN</name>
<keyword id="KW-0002">3D-structure</keyword>
<keyword id="KW-0007">Acetylation</keyword>
<keyword id="KW-0025">Alternative splicing</keyword>
<keyword id="KW-0225">Disease variant</keyword>
<keyword id="KW-0350">Heme biosynthesis</keyword>
<keyword id="KW-0360">Hereditary hemolytic anemia</keyword>
<keyword id="KW-0496">Mitochondrion</keyword>
<keyword id="KW-0560">Oxidoreductase</keyword>
<keyword id="KW-0597">Phosphoprotein</keyword>
<keyword id="KW-0627">Porphyrin biosynthesis</keyword>
<keyword id="KW-1267">Proteomics identification</keyword>
<keyword id="KW-1185">Reference proteome</keyword>
<keyword id="KW-0809">Transit peptide</keyword>